<name>H13A3_CYRHA</name>
<feature type="signal peptide" evidence="2">
    <location>
        <begin position="1"/>
        <end position="26"/>
    </location>
</feature>
<feature type="propeptide" id="PRO_0000400683" evidence="1">
    <location>
        <begin position="27"/>
        <end position="50"/>
    </location>
</feature>
<feature type="peptide" id="PRO_0000400684" description="U7-theraphotoxin-Hhn1a 3">
    <location>
        <begin position="51"/>
        <end position="90"/>
    </location>
</feature>
<feature type="disulfide bond" evidence="1">
    <location>
        <begin position="51"/>
        <end position="65"/>
    </location>
</feature>
<feature type="disulfide bond" evidence="1">
    <location>
        <begin position="58"/>
        <end position="70"/>
    </location>
</feature>
<feature type="disulfide bond" evidence="1">
    <location>
        <begin position="64"/>
        <end position="81"/>
    </location>
</feature>
<keyword id="KW-1015">Disulfide bond</keyword>
<keyword id="KW-0872">Ion channel impairing toxin</keyword>
<keyword id="KW-0960">Knottin</keyword>
<keyword id="KW-0964">Secreted</keyword>
<keyword id="KW-0732">Signal</keyword>
<keyword id="KW-0800">Toxin</keyword>
<accession>D2Y2A2</accession>
<proteinExistence type="evidence at transcript level"/>
<sequence length="90" mass="10569">MKTAIFTVVLALAVFAVLSFGWEANGKALSEEFTELIHEKEAASETEARECRYFWGECHDHMPCCDWLVCRYKWPITYNICVWNRTFPEK</sequence>
<dbReference type="EMBL" id="GU292979">
    <property type="protein sequence ID" value="ADB56795.1"/>
    <property type="molecule type" value="mRNA"/>
</dbReference>
<dbReference type="SMR" id="D2Y2A2"/>
<dbReference type="ArachnoServer" id="AS001986">
    <property type="toxin name" value="U7-theraphotoxin-Hhn1a"/>
</dbReference>
<dbReference type="GO" id="GO:0005576">
    <property type="term" value="C:extracellular region"/>
    <property type="evidence" value="ECO:0007669"/>
    <property type="project" value="UniProtKB-SubCell"/>
</dbReference>
<dbReference type="GO" id="GO:0008200">
    <property type="term" value="F:ion channel inhibitor activity"/>
    <property type="evidence" value="ECO:0007669"/>
    <property type="project" value="InterPro"/>
</dbReference>
<dbReference type="GO" id="GO:0090729">
    <property type="term" value="F:toxin activity"/>
    <property type="evidence" value="ECO:0007669"/>
    <property type="project" value="UniProtKB-KW"/>
</dbReference>
<dbReference type="InterPro" id="IPR011696">
    <property type="entry name" value="Huwentoxin-1"/>
</dbReference>
<dbReference type="Pfam" id="PF07740">
    <property type="entry name" value="Toxin_12"/>
    <property type="match status" value="1"/>
</dbReference>
<dbReference type="SUPFAM" id="SSF57059">
    <property type="entry name" value="omega toxin-like"/>
    <property type="match status" value="1"/>
</dbReference>
<protein>
    <recommendedName>
        <fullName>U7-theraphotoxin-Hhn1a 3</fullName>
        <shortName>U7-TRTX-Hhn1a</shortName>
    </recommendedName>
    <alternativeName>
        <fullName>Hainantoxin-XIII.3</fullName>
        <shortName>HNTX-XIII.3</shortName>
    </alternativeName>
</protein>
<comment type="function">
    <text evidence="1">Ion channel inhibitor.</text>
</comment>
<comment type="subcellular location">
    <subcellularLocation>
        <location evidence="1">Secreted</location>
    </subcellularLocation>
</comment>
<comment type="tissue specificity">
    <text>Expressed by the venom gland.</text>
</comment>
<comment type="domain">
    <text evidence="1">The presence of a 'disulfide through disulfide knot' structurally defines this protein as a knottin.</text>
</comment>
<comment type="similarity">
    <text evidence="3">Belongs to the neurotoxin 10 (Hwtx-1) family. 13 (Hntx-13) subfamily.</text>
</comment>
<evidence type="ECO:0000250" key="1"/>
<evidence type="ECO:0000255" key="2"/>
<evidence type="ECO:0000305" key="3"/>
<reference key="1">
    <citation type="journal article" date="2010" name="J. Proteome Res.">
        <title>Molecular diversification of peptide toxins from the tarantula Haplopelma hainanum (Ornithoctonus hainana) venom based on transcriptomic, peptidomic, and genomic analyses.</title>
        <authorList>
            <person name="Tang X."/>
            <person name="Zhang Y."/>
            <person name="Hu W."/>
            <person name="Xu D."/>
            <person name="Tao H."/>
            <person name="Yang X."/>
            <person name="Li Y."/>
            <person name="Jiang L."/>
            <person name="Liang S."/>
        </authorList>
    </citation>
    <scope>NUCLEOTIDE SEQUENCE [LARGE SCALE MRNA]</scope>
    <source>
        <tissue>Venom gland</tissue>
    </source>
</reference>
<organism>
    <name type="scientific">Cyriopagopus hainanus</name>
    <name type="common">Chinese bird spider</name>
    <name type="synonym">Haplopelma hainanum</name>
    <dbReference type="NCBI Taxonomy" id="209901"/>
    <lineage>
        <taxon>Eukaryota</taxon>
        <taxon>Metazoa</taxon>
        <taxon>Ecdysozoa</taxon>
        <taxon>Arthropoda</taxon>
        <taxon>Chelicerata</taxon>
        <taxon>Arachnida</taxon>
        <taxon>Araneae</taxon>
        <taxon>Mygalomorphae</taxon>
        <taxon>Theraphosidae</taxon>
        <taxon>Haplopelma</taxon>
    </lineage>
</organism>